<sequence>MDYQYFEEESDYIDLDEEEEDDDVVTAGSLDHRFGQPNGEEDYYFGGDDVEEELVVDGHGVLELAGRLLESLQSCVQPSVLQVMQYVAPMLLLCLLCRLLCLLYSQRRRLTSLAPLHLFHFACGLIILQITVGYRLLLLLLLAAVGYLLLQLLRLGRRGAQVLAVLTVGSQFLYELLIWRRRSDWPQLRGIQMVVNMKLISLGFDLTASGQLQARIPGPFAYLGYIYSPATCALGPWVSFGCYMDCLVPRNSWLVSLRRLLPNVVICVLAVTVSNCVAPALSDFFGDSSHFLVMYWDALSVRSSHYFVGMMAQALLVASDQRLDGATKESDMLGPLISQPWRIEWPRSISSLVRSWNIPMHEWLKRYIYAPCKPTASTSRGRILVVVLSTYLVSSLLHGMDLRIYLVLISLAFLAEGESLLRRQLASLLNACITANLCPGKERCRYSHCPSKRRLNSLSYWLARLTNLAFTALAIFHLAYLGVVLLGDDLEVGEDGDSFLWHWQQAGYLSHYIGLGTFVLYLFIS</sequence>
<dbReference type="EC" id="2.3.1.250" evidence="2"/>
<dbReference type="EMBL" id="U77310">
    <property type="protein sequence ID" value="AAB18992.1"/>
    <property type="molecule type" value="mRNA"/>
</dbReference>
<dbReference type="EMBL" id="AE014298">
    <property type="protein sequence ID" value="AAF48828.1"/>
    <property type="molecule type" value="Genomic_DNA"/>
</dbReference>
<dbReference type="EMBL" id="AY069578">
    <property type="protein sequence ID" value="AAL39723.1"/>
    <property type="molecule type" value="mRNA"/>
</dbReference>
<dbReference type="RefSeq" id="NP_001259679.1">
    <property type="nucleotide sequence ID" value="NM_001272750.1"/>
</dbReference>
<dbReference type="RefSeq" id="NP_001259680.1">
    <property type="nucleotide sequence ID" value="NM_001272751.1"/>
</dbReference>
<dbReference type="RefSeq" id="NP_476890.1">
    <property type="nucleotide sequence ID" value="NM_057542.3"/>
</dbReference>
<dbReference type="SMR" id="Q9VWV9"/>
<dbReference type="BioGRID" id="59135">
    <property type="interactions" value="11"/>
</dbReference>
<dbReference type="FunCoup" id="Q9VWV9">
    <property type="interactions" value="474"/>
</dbReference>
<dbReference type="IntAct" id="Q9VWV9">
    <property type="interactions" value="3"/>
</dbReference>
<dbReference type="STRING" id="7227.FBpp0074349"/>
<dbReference type="TCDB" id="2.A.50.3.2">
    <property type="family name" value="the glycerol uptake (gup) or membrane-bound acyl transferase (mboat) family"/>
</dbReference>
<dbReference type="PaxDb" id="7227-FBpp0305446"/>
<dbReference type="DNASU" id="32818"/>
<dbReference type="EnsemblMetazoa" id="FBtr0074577">
    <property type="protein sequence ID" value="FBpp0074349"/>
    <property type="gene ID" value="FBgn0004957"/>
</dbReference>
<dbReference type="EnsemblMetazoa" id="FBtr0310487">
    <property type="protein sequence ID" value="FBpp0302628"/>
    <property type="gene ID" value="FBgn0004957"/>
</dbReference>
<dbReference type="EnsemblMetazoa" id="FBtr0333247">
    <property type="protein sequence ID" value="FBpp0305446"/>
    <property type="gene ID" value="FBgn0004957"/>
</dbReference>
<dbReference type="GeneID" id="32818"/>
<dbReference type="KEGG" id="dme:Dmel_CG6205"/>
<dbReference type="UCSC" id="CG6205-RA">
    <property type="organism name" value="d. melanogaster"/>
</dbReference>
<dbReference type="AGR" id="FB:FBgn0004957"/>
<dbReference type="CTD" id="5447"/>
<dbReference type="FlyBase" id="FBgn0004957">
    <property type="gene designation" value="por"/>
</dbReference>
<dbReference type="VEuPathDB" id="VectorBase:FBgn0004957"/>
<dbReference type="eggNOG" id="KOG4312">
    <property type="taxonomic scope" value="Eukaryota"/>
</dbReference>
<dbReference type="GeneTree" id="ENSGT01030000234564"/>
<dbReference type="HOGENOM" id="CLU_048745_0_0_1"/>
<dbReference type="InParanoid" id="Q9VWV9"/>
<dbReference type="OMA" id="WRQRSDW"/>
<dbReference type="OrthoDB" id="5968863at2759"/>
<dbReference type="PhylomeDB" id="Q9VWV9"/>
<dbReference type="BRENDA" id="2.3.1.250">
    <property type="organism ID" value="1994"/>
</dbReference>
<dbReference type="SignaLink" id="Q9VWV9"/>
<dbReference type="BioGRID-ORCS" id="32818">
    <property type="hits" value="0 hits in 1 CRISPR screen"/>
</dbReference>
<dbReference type="GenomeRNAi" id="32818"/>
<dbReference type="PRO" id="PR:Q9VWV9"/>
<dbReference type="Proteomes" id="UP000000803">
    <property type="component" value="Chromosome X"/>
</dbReference>
<dbReference type="Bgee" id="FBgn0004957">
    <property type="expression patterns" value="Expressed in T neuron T4d (Drosophila) in embryonic/larval optic lobe (Drosophila) and 42 other cell types or tissues"/>
</dbReference>
<dbReference type="ExpressionAtlas" id="Q9VWV9">
    <property type="expression patterns" value="baseline and differential"/>
</dbReference>
<dbReference type="GO" id="GO:0005783">
    <property type="term" value="C:endoplasmic reticulum"/>
    <property type="evidence" value="ECO:0000314"/>
    <property type="project" value="UniProtKB"/>
</dbReference>
<dbReference type="GO" id="GO:0005789">
    <property type="term" value="C:endoplasmic reticulum membrane"/>
    <property type="evidence" value="ECO:0000303"/>
    <property type="project" value="UniProtKB"/>
</dbReference>
<dbReference type="GO" id="GO:0016020">
    <property type="term" value="C:membrane"/>
    <property type="evidence" value="ECO:0000318"/>
    <property type="project" value="GO_Central"/>
</dbReference>
<dbReference type="GO" id="GO:0016747">
    <property type="term" value="F:acyltransferase activity, transferring groups other than amino-acyl groups"/>
    <property type="evidence" value="ECO:0000315"/>
    <property type="project" value="FlyBase"/>
</dbReference>
<dbReference type="GO" id="GO:1990698">
    <property type="term" value="F:palmitoleoyltransferase activity"/>
    <property type="evidence" value="ECO:0000250"/>
    <property type="project" value="UniProtKB"/>
</dbReference>
<dbReference type="GO" id="GO:0017147">
    <property type="term" value="F:Wnt-protein binding"/>
    <property type="evidence" value="ECO:0000353"/>
    <property type="project" value="UniProtKB"/>
</dbReference>
<dbReference type="GO" id="GO:0030258">
    <property type="term" value="P:lipid modification"/>
    <property type="evidence" value="ECO:0000318"/>
    <property type="project" value="GO_Central"/>
</dbReference>
<dbReference type="GO" id="GO:0016486">
    <property type="term" value="P:peptide hormone processing"/>
    <property type="evidence" value="ECO:0000315"/>
    <property type="project" value="UniProtKB"/>
</dbReference>
<dbReference type="GO" id="GO:0008104">
    <property type="term" value="P:protein localization"/>
    <property type="evidence" value="ECO:0000315"/>
    <property type="project" value="UniProtKB"/>
</dbReference>
<dbReference type="GO" id="GO:0051604">
    <property type="term" value="P:protein maturation"/>
    <property type="evidence" value="ECO:0000315"/>
    <property type="project" value="UniProtKB"/>
</dbReference>
<dbReference type="GO" id="GO:0030111">
    <property type="term" value="P:regulation of Wnt signaling pathway"/>
    <property type="evidence" value="ECO:0000315"/>
    <property type="project" value="UniProtKB"/>
</dbReference>
<dbReference type="GO" id="GO:0061355">
    <property type="term" value="P:Wnt protein secretion"/>
    <property type="evidence" value="ECO:0000315"/>
    <property type="project" value="FlyBase"/>
</dbReference>
<dbReference type="GO" id="GO:0016055">
    <property type="term" value="P:Wnt signaling pathway"/>
    <property type="evidence" value="ECO:0000250"/>
    <property type="project" value="UniProtKB"/>
</dbReference>
<dbReference type="InterPro" id="IPR049941">
    <property type="entry name" value="LPLAT_7/PORCN-like"/>
</dbReference>
<dbReference type="InterPro" id="IPR004299">
    <property type="entry name" value="MBOAT_fam"/>
</dbReference>
<dbReference type="PANTHER" id="PTHR13906">
    <property type="entry name" value="PORCUPINE"/>
    <property type="match status" value="1"/>
</dbReference>
<dbReference type="PANTHER" id="PTHR13906:SF12">
    <property type="entry name" value="PROTEIN-SERINE O-PALMITOLEOYLTRANSFERASE PORCUPINE"/>
    <property type="match status" value="1"/>
</dbReference>
<dbReference type="Pfam" id="PF03062">
    <property type="entry name" value="MBOAT"/>
    <property type="match status" value="1"/>
</dbReference>
<comment type="function">
    <text evidence="2 5 7 8 9">Protein-serine O-palmitoleoyltransferase that acts as a key regulator of the Wnt signaling pathway by mediating the attachment of palmitoleate, a 16-carbon monounsaturated fatty acid (C16:1(9Z)), to Wnt proteins. Serine palmitoleoylation of Wnt proteins is required for efficient binding to frizzled receptors (By similarity). Also facilitates the glycosylation of Wnt family members, including wg and Wnt5. The cotranslational disulfide bond formation of wg competes with the N-glycosylation. Porc stimulates the post-translational N-glycosylation by anchoring wg at the ER membrane, probably through acylation (PubMed:11821428, PubMed:15166250, PubMed:22108505, PubMed:8985181).</text>
</comment>
<comment type="catalytic activity">
    <reaction evidence="2">
        <text>[Wnt protein]-L-serine + (9Z)-hexadecenoyl-CoA = [Wnt protein]-O-(9Z)-hexadecenoyl-L-serine + CoA</text>
        <dbReference type="Rhea" id="RHEA:45336"/>
        <dbReference type="Rhea" id="RHEA-COMP:11170"/>
        <dbReference type="Rhea" id="RHEA-COMP:11171"/>
        <dbReference type="ChEBI" id="CHEBI:29999"/>
        <dbReference type="ChEBI" id="CHEBI:57287"/>
        <dbReference type="ChEBI" id="CHEBI:61540"/>
        <dbReference type="ChEBI" id="CHEBI:85189"/>
        <dbReference type="EC" id="2.3.1.250"/>
    </reaction>
</comment>
<comment type="subunit">
    <text evidence="5">Interacts with wg and Wnt5.</text>
</comment>
<comment type="subcellular location">
    <subcellularLocation>
        <location evidence="5 9">Endoplasmic reticulum membrane</location>
        <topology evidence="5 9">Multi-pass membrane protein</topology>
    </subcellularLocation>
</comment>
<comment type="developmental stage">
    <text evidence="9">Expressed both maternally and zygotically.</text>
</comment>
<comment type="similarity">
    <text evidence="11">Belongs to the membrane-bound acyltransferase family. Porcupine subfamily.</text>
</comment>
<comment type="caution">
    <text evidence="11">Was initially thought to mediate palmitoylation of Wnt proteins. It was later shown that instead it acts as a serine O-palmitoleoyltransferase that mediates the attachment of palmitoleate, a 16-carbon monounsaturated fatty acid (C16:1(9Z)), to Wnt proteins.</text>
</comment>
<protein>
    <recommendedName>
        <fullName evidence="2">Protein-serine O-palmitoleoyltransferase porcupine</fullName>
        <ecNumber evidence="2">2.3.1.250</ecNumber>
    </recommendedName>
</protein>
<reference key="1">
    <citation type="journal article" date="1996" name="Genes Dev.">
        <title>The segment polarity gene porcupine encodes a putative multitransmembrane protein involved in Wingless processing.</title>
        <authorList>
            <person name="Kadowaki T."/>
            <person name="Wilder E."/>
            <person name="Klingensmith J."/>
            <person name="Zachary K."/>
            <person name="Perrimon N."/>
        </authorList>
    </citation>
    <scope>NUCLEOTIDE SEQUENCE [MRNA]</scope>
    <scope>FUNCTION</scope>
    <scope>SUBCELLULAR LOCATION</scope>
    <scope>DEVELOPMENTAL STAGE</scope>
</reference>
<reference key="2">
    <citation type="journal article" date="2000" name="Science">
        <title>The genome sequence of Drosophila melanogaster.</title>
        <authorList>
            <person name="Adams M.D."/>
            <person name="Celniker S.E."/>
            <person name="Holt R.A."/>
            <person name="Evans C.A."/>
            <person name="Gocayne J.D."/>
            <person name="Amanatides P.G."/>
            <person name="Scherer S.E."/>
            <person name="Li P.W."/>
            <person name="Hoskins R.A."/>
            <person name="Galle R.F."/>
            <person name="George R.A."/>
            <person name="Lewis S.E."/>
            <person name="Richards S."/>
            <person name="Ashburner M."/>
            <person name="Henderson S.N."/>
            <person name="Sutton G.G."/>
            <person name="Wortman J.R."/>
            <person name="Yandell M.D."/>
            <person name="Zhang Q."/>
            <person name="Chen L.X."/>
            <person name="Brandon R.C."/>
            <person name="Rogers Y.-H.C."/>
            <person name="Blazej R.G."/>
            <person name="Champe M."/>
            <person name="Pfeiffer B.D."/>
            <person name="Wan K.H."/>
            <person name="Doyle C."/>
            <person name="Baxter E.G."/>
            <person name="Helt G."/>
            <person name="Nelson C.R."/>
            <person name="Miklos G.L.G."/>
            <person name="Abril J.F."/>
            <person name="Agbayani A."/>
            <person name="An H.-J."/>
            <person name="Andrews-Pfannkoch C."/>
            <person name="Baldwin D."/>
            <person name="Ballew R.M."/>
            <person name="Basu A."/>
            <person name="Baxendale J."/>
            <person name="Bayraktaroglu L."/>
            <person name="Beasley E.M."/>
            <person name="Beeson K.Y."/>
            <person name="Benos P.V."/>
            <person name="Berman B.P."/>
            <person name="Bhandari D."/>
            <person name="Bolshakov S."/>
            <person name="Borkova D."/>
            <person name="Botchan M.R."/>
            <person name="Bouck J."/>
            <person name="Brokstein P."/>
            <person name="Brottier P."/>
            <person name="Burtis K.C."/>
            <person name="Busam D.A."/>
            <person name="Butler H."/>
            <person name="Cadieu E."/>
            <person name="Center A."/>
            <person name="Chandra I."/>
            <person name="Cherry J.M."/>
            <person name="Cawley S."/>
            <person name="Dahlke C."/>
            <person name="Davenport L.B."/>
            <person name="Davies P."/>
            <person name="de Pablos B."/>
            <person name="Delcher A."/>
            <person name="Deng Z."/>
            <person name="Mays A.D."/>
            <person name="Dew I."/>
            <person name="Dietz S.M."/>
            <person name="Dodson K."/>
            <person name="Doup L.E."/>
            <person name="Downes M."/>
            <person name="Dugan-Rocha S."/>
            <person name="Dunkov B.C."/>
            <person name="Dunn P."/>
            <person name="Durbin K.J."/>
            <person name="Evangelista C.C."/>
            <person name="Ferraz C."/>
            <person name="Ferriera S."/>
            <person name="Fleischmann W."/>
            <person name="Fosler C."/>
            <person name="Gabrielian A.E."/>
            <person name="Garg N.S."/>
            <person name="Gelbart W.M."/>
            <person name="Glasser K."/>
            <person name="Glodek A."/>
            <person name="Gong F."/>
            <person name="Gorrell J.H."/>
            <person name="Gu Z."/>
            <person name="Guan P."/>
            <person name="Harris M."/>
            <person name="Harris N.L."/>
            <person name="Harvey D.A."/>
            <person name="Heiman T.J."/>
            <person name="Hernandez J.R."/>
            <person name="Houck J."/>
            <person name="Hostin D."/>
            <person name="Houston K.A."/>
            <person name="Howland T.J."/>
            <person name="Wei M.-H."/>
            <person name="Ibegwam C."/>
            <person name="Jalali M."/>
            <person name="Kalush F."/>
            <person name="Karpen G.H."/>
            <person name="Ke Z."/>
            <person name="Kennison J.A."/>
            <person name="Ketchum K.A."/>
            <person name="Kimmel B.E."/>
            <person name="Kodira C.D."/>
            <person name="Kraft C.L."/>
            <person name="Kravitz S."/>
            <person name="Kulp D."/>
            <person name="Lai Z."/>
            <person name="Lasko P."/>
            <person name="Lei Y."/>
            <person name="Levitsky A.A."/>
            <person name="Li J.H."/>
            <person name="Li Z."/>
            <person name="Liang Y."/>
            <person name="Lin X."/>
            <person name="Liu X."/>
            <person name="Mattei B."/>
            <person name="McIntosh T.C."/>
            <person name="McLeod M.P."/>
            <person name="McPherson D."/>
            <person name="Merkulov G."/>
            <person name="Milshina N.V."/>
            <person name="Mobarry C."/>
            <person name="Morris J."/>
            <person name="Moshrefi A."/>
            <person name="Mount S.M."/>
            <person name="Moy M."/>
            <person name="Murphy B."/>
            <person name="Murphy L."/>
            <person name="Muzny D.M."/>
            <person name="Nelson D.L."/>
            <person name="Nelson D.R."/>
            <person name="Nelson K.A."/>
            <person name="Nixon K."/>
            <person name="Nusskern D.R."/>
            <person name="Pacleb J.M."/>
            <person name="Palazzolo M."/>
            <person name="Pittman G.S."/>
            <person name="Pan S."/>
            <person name="Pollard J."/>
            <person name="Puri V."/>
            <person name="Reese M.G."/>
            <person name="Reinert K."/>
            <person name="Remington K."/>
            <person name="Saunders R.D.C."/>
            <person name="Scheeler F."/>
            <person name="Shen H."/>
            <person name="Shue B.C."/>
            <person name="Siden-Kiamos I."/>
            <person name="Simpson M."/>
            <person name="Skupski M.P."/>
            <person name="Smith T.J."/>
            <person name="Spier E."/>
            <person name="Spradling A.C."/>
            <person name="Stapleton M."/>
            <person name="Strong R."/>
            <person name="Sun E."/>
            <person name="Svirskas R."/>
            <person name="Tector C."/>
            <person name="Turner R."/>
            <person name="Venter E."/>
            <person name="Wang A.H."/>
            <person name="Wang X."/>
            <person name="Wang Z.-Y."/>
            <person name="Wassarman D.A."/>
            <person name="Weinstock G.M."/>
            <person name="Weissenbach J."/>
            <person name="Williams S.M."/>
            <person name="Woodage T."/>
            <person name="Worley K.C."/>
            <person name="Wu D."/>
            <person name="Yang S."/>
            <person name="Yao Q.A."/>
            <person name="Ye J."/>
            <person name="Yeh R.-F."/>
            <person name="Zaveri J.S."/>
            <person name="Zhan M."/>
            <person name="Zhang G."/>
            <person name="Zhao Q."/>
            <person name="Zheng L."/>
            <person name="Zheng X.H."/>
            <person name="Zhong F.N."/>
            <person name="Zhong W."/>
            <person name="Zhou X."/>
            <person name="Zhu S.C."/>
            <person name="Zhu X."/>
            <person name="Smith H.O."/>
            <person name="Gibbs R.A."/>
            <person name="Myers E.W."/>
            <person name="Rubin G.M."/>
            <person name="Venter J.C."/>
        </authorList>
    </citation>
    <scope>NUCLEOTIDE SEQUENCE [LARGE SCALE GENOMIC DNA]</scope>
    <source>
        <strain evidence="4">Berkeley</strain>
    </source>
</reference>
<reference key="3">
    <citation type="journal article" date="2002" name="Genome Biol.">
        <title>Annotation of the Drosophila melanogaster euchromatic genome: a systematic review.</title>
        <authorList>
            <person name="Misra S."/>
            <person name="Crosby M.A."/>
            <person name="Mungall C.J."/>
            <person name="Matthews B.B."/>
            <person name="Campbell K.S."/>
            <person name="Hradecky P."/>
            <person name="Huang Y."/>
            <person name="Kaminker J.S."/>
            <person name="Millburn G.H."/>
            <person name="Prochnik S.E."/>
            <person name="Smith C.D."/>
            <person name="Tupy J.L."/>
            <person name="Whitfield E.J."/>
            <person name="Bayraktaroglu L."/>
            <person name="Berman B.P."/>
            <person name="Bettencourt B.R."/>
            <person name="Celniker S.E."/>
            <person name="de Grey A.D.N.J."/>
            <person name="Drysdale R.A."/>
            <person name="Harris N.L."/>
            <person name="Richter J."/>
            <person name="Russo S."/>
            <person name="Schroeder A.J."/>
            <person name="Shu S.Q."/>
            <person name="Stapleton M."/>
            <person name="Yamada C."/>
            <person name="Ashburner M."/>
            <person name="Gelbart W.M."/>
            <person name="Rubin G.M."/>
            <person name="Lewis S.E."/>
        </authorList>
    </citation>
    <scope>GENOME REANNOTATION</scope>
    <source>
        <strain>Berkeley</strain>
    </source>
</reference>
<reference key="4">
    <citation type="journal article" date="2002" name="Genome Biol.">
        <title>A Drosophila full-length cDNA resource.</title>
        <authorList>
            <person name="Stapleton M."/>
            <person name="Carlson J.W."/>
            <person name="Brokstein P."/>
            <person name="Yu C."/>
            <person name="Champe M."/>
            <person name="George R.A."/>
            <person name="Guarin H."/>
            <person name="Kronmiller B."/>
            <person name="Pacleb J.M."/>
            <person name="Park S."/>
            <person name="Wan K.H."/>
            <person name="Rubin G.M."/>
            <person name="Celniker S.E."/>
        </authorList>
    </citation>
    <scope>NUCLEOTIDE SEQUENCE [LARGE SCALE MRNA]</scope>
    <source>
        <strain evidence="12">Berkeley</strain>
        <tissue evidence="6">Embryo</tissue>
    </source>
</reference>
<reference key="5">
    <citation type="journal article" date="2002" name="J. Biol. Chem.">
        <title>Drosophila segment polarity gene product porcupine stimulates the posttranslational N-glycosylation of wingless in the endoplasmic reticulum.</title>
        <authorList>
            <person name="Tanaka K."/>
            <person name="Kitagawa Y."/>
            <person name="Kadowaki T."/>
        </authorList>
    </citation>
    <scope>FUNCTION</scope>
    <scope>GLYCOSYLATION OF WG AND WNT5</scope>
    <scope>INTERACTION WITH WG AND WNT5</scope>
    <scope>SUBCELLULAR LOCATION</scope>
</reference>
<reference key="6">
    <citation type="journal article" date="2004" name="J. Biol. Chem.">
        <title>Drosophila wnt-1 undergoes a hydrophobic modification and is targeted to lipid rafts, a process that requires porcupine.</title>
        <authorList>
            <person name="Zhai L."/>
            <person name="Chaturvedi D."/>
            <person name="Cumberledge S."/>
        </authorList>
    </citation>
    <scope>FUNCTION</scope>
</reference>
<reference key="7">
    <citation type="journal article" date="2012" name="Dev. Biol.">
        <title>Porcupine-mediated lipidation is required for Wnt recognition by Wls.</title>
        <authorList>
            <person name="Herr P."/>
            <person name="Basler K."/>
        </authorList>
    </citation>
    <scope>FUNCTION</scope>
</reference>
<name>PORCN_DROME</name>
<feature type="chain" id="PRO_0000213140" description="Protein-serine O-palmitoleoyltransferase porcupine">
    <location>
        <begin position="1"/>
        <end position="525"/>
    </location>
</feature>
<feature type="transmembrane region" description="Helical" evidence="3">
    <location>
        <begin position="83"/>
        <end position="103"/>
    </location>
</feature>
<feature type="transmembrane region" description="Helical" evidence="3">
    <location>
        <begin position="125"/>
        <end position="145"/>
    </location>
</feature>
<feature type="transmembrane region" description="Helical" evidence="3">
    <location>
        <begin position="159"/>
        <end position="179"/>
    </location>
</feature>
<feature type="transmembrane region" description="Helical" evidence="3">
    <location>
        <begin position="220"/>
        <end position="240"/>
    </location>
</feature>
<feature type="transmembrane region" description="Helical" evidence="3">
    <location>
        <begin position="260"/>
        <end position="280"/>
    </location>
</feature>
<feature type="transmembrane region" description="Helical" evidence="3">
    <location>
        <begin position="301"/>
        <end position="318"/>
    </location>
</feature>
<feature type="transmembrane region" description="Helical" evidence="3">
    <location>
        <begin position="395"/>
        <end position="415"/>
    </location>
</feature>
<feature type="transmembrane region" description="Helical" evidence="3">
    <location>
        <begin position="467"/>
        <end position="487"/>
    </location>
</feature>
<feature type="transmembrane region" description="Helical" evidence="3">
    <location>
        <begin position="505"/>
        <end position="525"/>
    </location>
</feature>
<feature type="active site" evidence="1">
    <location>
        <position position="398"/>
    </location>
</feature>
<feature type="sequence conflict" description="In Ref. 1; AAB18992." evidence="11" ref="1">
    <original>A</original>
    <variation>V</variation>
    <location>
        <position position="463"/>
    </location>
</feature>
<organism>
    <name type="scientific">Drosophila melanogaster</name>
    <name type="common">Fruit fly</name>
    <dbReference type="NCBI Taxonomy" id="7227"/>
    <lineage>
        <taxon>Eukaryota</taxon>
        <taxon>Metazoa</taxon>
        <taxon>Ecdysozoa</taxon>
        <taxon>Arthropoda</taxon>
        <taxon>Hexapoda</taxon>
        <taxon>Insecta</taxon>
        <taxon>Pterygota</taxon>
        <taxon>Neoptera</taxon>
        <taxon>Endopterygota</taxon>
        <taxon>Diptera</taxon>
        <taxon>Brachycera</taxon>
        <taxon>Muscomorpha</taxon>
        <taxon>Ephydroidea</taxon>
        <taxon>Drosophilidae</taxon>
        <taxon>Drosophila</taxon>
        <taxon>Sophophora</taxon>
    </lineage>
</organism>
<accession>Q9VWV9</accession>
<accession>Q94549</accession>
<evidence type="ECO:0000250" key="1">
    <source>
        <dbReference type="UniProtKB" id="Q9H237"/>
    </source>
</evidence>
<evidence type="ECO:0000250" key="2">
    <source>
        <dbReference type="UniProtKB" id="Q9JJJ7"/>
    </source>
</evidence>
<evidence type="ECO:0000255" key="3"/>
<evidence type="ECO:0000269" key="4">
    <source>
    </source>
</evidence>
<evidence type="ECO:0000269" key="5">
    <source>
    </source>
</evidence>
<evidence type="ECO:0000269" key="6">
    <source>
    </source>
</evidence>
<evidence type="ECO:0000269" key="7">
    <source>
    </source>
</evidence>
<evidence type="ECO:0000269" key="8">
    <source>
    </source>
</evidence>
<evidence type="ECO:0000269" key="9">
    <source>
    </source>
</evidence>
<evidence type="ECO:0000303" key="10">
    <source>
    </source>
</evidence>
<evidence type="ECO:0000305" key="11"/>
<evidence type="ECO:0000312" key="12">
    <source>
        <dbReference type="EMBL" id="AAL39723.1"/>
    </source>
</evidence>
<evidence type="ECO:0000312" key="13">
    <source>
        <dbReference type="FlyBase" id="FBgn0004957"/>
    </source>
</evidence>
<proteinExistence type="evidence at protein level"/>
<keyword id="KW-0012">Acyltransferase</keyword>
<keyword id="KW-0256">Endoplasmic reticulum</keyword>
<keyword id="KW-0472">Membrane</keyword>
<keyword id="KW-1185">Reference proteome</keyword>
<keyword id="KW-0808">Transferase</keyword>
<keyword id="KW-0812">Transmembrane</keyword>
<keyword id="KW-1133">Transmembrane helix</keyword>
<keyword id="KW-0879">Wnt signaling pathway</keyword>
<gene>
    <name evidence="13" type="primary">por</name>
    <name evidence="10" type="synonym">porc</name>
    <name type="ORF">CG6205</name>
</gene>